<reference key="1">
    <citation type="journal article" date="2000" name="Genome Res.">
        <title>Cloning and functional analysis of cDNAs with open reading frames for 300 previously undefined genes expressed in CD34+ hematopoietic stem/progenitor cells.</title>
        <authorList>
            <person name="Zhang Q.-H."/>
            <person name="Ye M."/>
            <person name="Wu X.-Y."/>
            <person name="Ren S.-X."/>
            <person name="Zhao M."/>
            <person name="Zhao C.-J."/>
            <person name="Fu G."/>
            <person name="Shen Y."/>
            <person name="Fan H.-Y."/>
            <person name="Lu G."/>
            <person name="Zhong M."/>
            <person name="Xu X.-R."/>
            <person name="Han Z.-G."/>
            <person name="Zhang J.-W."/>
            <person name="Tao J."/>
            <person name="Huang Q.-H."/>
            <person name="Zhou J."/>
            <person name="Hu G.-X."/>
            <person name="Gu J."/>
            <person name="Chen S.-J."/>
            <person name="Chen Z."/>
        </authorList>
    </citation>
    <scope>NUCLEOTIDE SEQUENCE [LARGE SCALE MRNA]</scope>
    <source>
        <tissue>Blood</tissue>
    </source>
</reference>
<reference key="2">
    <citation type="journal article" date="2004" name="Nat. Genet.">
        <title>Complete sequencing and characterization of 21,243 full-length human cDNAs.</title>
        <authorList>
            <person name="Ota T."/>
            <person name="Suzuki Y."/>
            <person name="Nishikawa T."/>
            <person name="Otsuki T."/>
            <person name="Sugiyama T."/>
            <person name="Irie R."/>
            <person name="Wakamatsu A."/>
            <person name="Hayashi K."/>
            <person name="Sato H."/>
            <person name="Nagai K."/>
            <person name="Kimura K."/>
            <person name="Makita H."/>
            <person name="Sekine M."/>
            <person name="Obayashi M."/>
            <person name="Nishi T."/>
            <person name="Shibahara T."/>
            <person name="Tanaka T."/>
            <person name="Ishii S."/>
            <person name="Yamamoto J."/>
            <person name="Saito K."/>
            <person name="Kawai Y."/>
            <person name="Isono Y."/>
            <person name="Nakamura Y."/>
            <person name="Nagahari K."/>
            <person name="Murakami K."/>
            <person name="Yasuda T."/>
            <person name="Iwayanagi T."/>
            <person name="Wagatsuma M."/>
            <person name="Shiratori A."/>
            <person name="Sudo H."/>
            <person name="Hosoiri T."/>
            <person name="Kaku Y."/>
            <person name="Kodaira H."/>
            <person name="Kondo H."/>
            <person name="Sugawara M."/>
            <person name="Takahashi M."/>
            <person name="Kanda K."/>
            <person name="Yokoi T."/>
            <person name="Furuya T."/>
            <person name="Kikkawa E."/>
            <person name="Omura Y."/>
            <person name="Abe K."/>
            <person name="Kamihara K."/>
            <person name="Katsuta N."/>
            <person name="Sato K."/>
            <person name="Tanikawa M."/>
            <person name="Yamazaki M."/>
            <person name="Ninomiya K."/>
            <person name="Ishibashi T."/>
            <person name="Yamashita H."/>
            <person name="Murakawa K."/>
            <person name="Fujimori K."/>
            <person name="Tanai H."/>
            <person name="Kimata M."/>
            <person name="Watanabe M."/>
            <person name="Hiraoka S."/>
            <person name="Chiba Y."/>
            <person name="Ishida S."/>
            <person name="Ono Y."/>
            <person name="Takiguchi S."/>
            <person name="Watanabe S."/>
            <person name="Yosida M."/>
            <person name="Hotuta T."/>
            <person name="Kusano J."/>
            <person name="Kanehori K."/>
            <person name="Takahashi-Fujii A."/>
            <person name="Hara H."/>
            <person name="Tanase T.-O."/>
            <person name="Nomura Y."/>
            <person name="Togiya S."/>
            <person name="Komai F."/>
            <person name="Hara R."/>
            <person name="Takeuchi K."/>
            <person name="Arita M."/>
            <person name="Imose N."/>
            <person name="Musashino K."/>
            <person name="Yuuki H."/>
            <person name="Oshima A."/>
            <person name="Sasaki N."/>
            <person name="Aotsuka S."/>
            <person name="Yoshikawa Y."/>
            <person name="Matsunawa H."/>
            <person name="Ichihara T."/>
            <person name="Shiohata N."/>
            <person name="Sano S."/>
            <person name="Moriya S."/>
            <person name="Momiyama H."/>
            <person name="Satoh N."/>
            <person name="Takami S."/>
            <person name="Terashima Y."/>
            <person name="Suzuki O."/>
            <person name="Nakagawa S."/>
            <person name="Senoh A."/>
            <person name="Mizoguchi H."/>
            <person name="Goto Y."/>
            <person name="Shimizu F."/>
            <person name="Wakebe H."/>
            <person name="Hishigaki H."/>
            <person name="Watanabe T."/>
            <person name="Sugiyama A."/>
            <person name="Takemoto M."/>
            <person name="Kawakami B."/>
            <person name="Yamazaki M."/>
            <person name="Watanabe K."/>
            <person name="Kumagai A."/>
            <person name="Itakura S."/>
            <person name="Fukuzumi Y."/>
            <person name="Fujimori Y."/>
            <person name="Komiyama M."/>
            <person name="Tashiro H."/>
            <person name="Tanigami A."/>
            <person name="Fujiwara T."/>
            <person name="Ono T."/>
            <person name="Yamada K."/>
            <person name="Fujii Y."/>
            <person name="Ozaki K."/>
            <person name="Hirao M."/>
            <person name="Ohmori Y."/>
            <person name="Kawabata A."/>
            <person name="Hikiji T."/>
            <person name="Kobatake N."/>
            <person name="Inagaki H."/>
            <person name="Ikema Y."/>
            <person name="Okamoto S."/>
            <person name="Okitani R."/>
            <person name="Kawakami T."/>
            <person name="Noguchi S."/>
            <person name="Itoh T."/>
            <person name="Shigeta K."/>
            <person name="Senba T."/>
            <person name="Matsumura K."/>
            <person name="Nakajima Y."/>
            <person name="Mizuno T."/>
            <person name="Morinaga M."/>
            <person name="Sasaki M."/>
            <person name="Togashi T."/>
            <person name="Oyama M."/>
            <person name="Hata H."/>
            <person name="Watanabe M."/>
            <person name="Komatsu T."/>
            <person name="Mizushima-Sugano J."/>
            <person name="Satoh T."/>
            <person name="Shirai Y."/>
            <person name="Takahashi Y."/>
            <person name="Nakagawa K."/>
            <person name="Okumura K."/>
            <person name="Nagase T."/>
            <person name="Nomura N."/>
            <person name="Kikuchi H."/>
            <person name="Masuho Y."/>
            <person name="Yamashita R."/>
            <person name="Nakai K."/>
            <person name="Yada T."/>
            <person name="Nakamura Y."/>
            <person name="Ohara O."/>
            <person name="Isogai T."/>
            <person name="Sugano S."/>
        </authorList>
    </citation>
    <scope>NUCLEOTIDE SEQUENCE [LARGE SCALE MRNA]</scope>
    <source>
        <tissue>Placenta</tissue>
    </source>
</reference>
<reference key="3">
    <citation type="submission" date="2005-09" db="EMBL/GenBank/DDBJ databases">
        <authorList>
            <person name="Mural R.J."/>
            <person name="Istrail S."/>
            <person name="Sutton G.G."/>
            <person name="Florea L."/>
            <person name="Halpern A.L."/>
            <person name="Mobarry C.M."/>
            <person name="Lippert R."/>
            <person name="Walenz B."/>
            <person name="Shatkay H."/>
            <person name="Dew I."/>
            <person name="Miller J.R."/>
            <person name="Flanigan M.J."/>
            <person name="Edwards N.J."/>
            <person name="Bolanos R."/>
            <person name="Fasulo D."/>
            <person name="Halldorsson B.V."/>
            <person name="Hannenhalli S."/>
            <person name="Turner R."/>
            <person name="Yooseph S."/>
            <person name="Lu F."/>
            <person name="Nusskern D.R."/>
            <person name="Shue B.C."/>
            <person name="Zheng X.H."/>
            <person name="Zhong F."/>
            <person name="Delcher A.L."/>
            <person name="Huson D.H."/>
            <person name="Kravitz S.A."/>
            <person name="Mouchard L."/>
            <person name="Reinert K."/>
            <person name="Remington K.A."/>
            <person name="Clark A.G."/>
            <person name="Waterman M.S."/>
            <person name="Eichler E.E."/>
            <person name="Adams M.D."/>
            <person name="Hunkapiller M.W."/>
            <person name="Myers E.W."/>
            <person name="Venter J.C."/>
        </authorList>
    </citation>
    <scope>NUCLEOTIDE SEQUENCE [LARGE SCALE GENOMIC DNA]</scope>
</reference>
<reference key="4">
    <citation type="journal article" date="2004" name="Genome Res.">
        <title>The status, quality, and expansion of the NIH full-length cDNA project: the Mammalian Gene Collection (MGC).</title>
        <authorList>
            <consortium name="The MGC Project Team"/>
        </authorList>
    </citation>
    <scope>NUCLEOTIDE SEQUENCE [LARGE SCALE MRNA]</scope>
    <source>
        <tissue>Brain</tissue>
    </source>
</reference>
<reference key="5">
    <citation type="journal article" date="2006" name="Acta Crystallogr. F">
        <title>Expression, purification, crystallization and preliminary X-ray characterization of the GRP carbohydrate-recognition domain from Homo sapiens.</title>
        <authorList>
            <person name="Zhou D."/>
            <person name="Sun J."/>
            <person name="Zhao W."/>
            <person name="Zhang X."/>
            <person name="Shi Y."/>
            <person name="Teng M."/>
            <person name="Niu L."/>
            <person name="Dong Y."/>
            <person name="Liu P."/>
        </authorList>
    </citation>
    <scope>CRYSTALLIZATION</scope>
</reference>
<reference key="6">
    <citation type="journal article" date="2008" name="Proc. Natl. Acad. Sci. U.S.A.">
        <title>A quantitative atlas of mitotic phosphorylation.</title>
        <authorList>
            <person name="Dephoure N."/>
            <person name="Zhou C."/>
            <person name="Villen J."/>
            <person name="Beausoleil S.A."/>
            <person name="Bakalarski C.E."/>
            <person name="Elledge S.J."/>
            <person name="Gygi S.P."/>
        </authorList>
    </citation>
    <scope>PHOSPHORYLATION [LARGE SCALE ANALYSIS] AT SER-22 AND SER-25</scope>
    <scope>IDENTIFICATION BY MASS SPECTROMETRY [LARGE SCALE ANALYSIS]</scope>
    <source>
        <tissue>Cervix carcinoma</tissue>
    </source>
</reference>
<reference key="7">
    <citation type="journal article" date="2009" name="Anal. Chem.">
        <title>Lys-N and trypsin cover complementary parts of the phosphoproteome in a refined SCX-based approach.</title>
        <authorList>
            <person name="Gauci S."/>
            <person name="Helbig A.O."/>
            <person name="Slijper M."/>
            <person name="Krijgsveld J."/>
            <person name="Heck A.J."/>
            <person name="Mohammed S."/>
        </authorList>
    </citation>
    <scope>ACETYLATION [LARGE SCALE ANALYSIS] AT ALA-2</scope>
    <scope>CLEAVAGE OF INITIATOR METHIONINE [LARGE SCALE ANALYSIS]</scope>
    <scope>IDENTIFICATION BY MASS SPECTROMETRY [LARGE SCALE ANALYSIS]</scope>
</reference>
<reference key="8">
    <citation type="journal article" date="2010" name="Sci. Signal.">
        <title>Quantitative phosphoproteomics reveals widespread full phosphorylation site occupancy during mitosis.</title>
        <authorList>
            <person name="Olsen J.V."/>
            <person name="Vermeulen M."/>
            <person name="Santamaria A."/>
            <person name="Kumar C."/>
            <person name="Miller M.L."/>
            <person name="Jensen L.J."/>
            <person name="Gnad F."/>
            <person name="Cox J."/>
            <person name="Jensen T.S."/>
            <person name="Nigg E.A."/>
            <person name="Brunak S."/>
            <person name="Mann M."/>
        </authorList>
    </citation>
    <scope>PHOSPHORYLATION [LARGE SCALE ANALYSIS] AT SER-22</scope>
    <scope>IDENTIFICATION BY MASS SPECTROMETRY [LARGE SCALE ANALYSIS]</scope>
    <source>
        <tissue>Cervix carcinoma</tissue>
    </source>
</reference>
<reference key="9">
    <citation type="journal article" date="2011" name="BMC Syst. Biol.">
        <title>Initial characterization of the human central proteome.</title>
        <authorList>
            <person name="Burkard T.R."/>
            <person name="Planyavsky M."/>
            <person name="Kaupe I."/>
            <person name="Breitwieser F.P."/>
            <person name="Buerckstuemmer T."/>
            <person name="Bennett K.L."/>
            <person name="Superti-Furga G."/>
            <person name="Colinge J."/>
        </authorList>
    </citation>
    <scope>IDENTIFICATION BY MASS SPECTROMETRY [LARGE SCALE ANALYSIS]</scope>
</reference>
<reference key="10">
    <citation type="journal article" date="2013" name="J. Proteome Res.">
        <title>Toward a comprehensive characterization of a human cancer cell phosphoproteome.</title>
        <authorList>
            <person name="Zhou H."/>
            <person name="Di Palma S."/>
            <person name="Preisinger C."/>
            <person name="Peng M."/>
            <person name="Polat A.N."/>
            <person name="Heck A.J."/>
            <person name="Mohammed S."/>
        </authorList>
    </citation>
    <scope>IDENTIFICATION BY MASS SPECTROMETRY [LARGE SCALE ANALYSIS]</scope>
    <source>
        <tissue>Cervix carcinoma</tissue>
    </source>
</reference>
<reference key="11">
    <citation type="journal article" date="2008" name="Proteins">
        <title>Crystal structure of the C-terminal conserved domain of human GRP, a galectin-related protein, reveals a function mode different from those of galectins.</title>
        <authorList>
            <person name="Zhou D."/>
            <person name="Ge H."/>
            <person name="Sun J."/>
            <person name="Gao Y."/>
            <person name="Teng M."/>
            <person name="Niu L."/>
        </authorList>
    </citation>
    <scope>X-RAY CRYSTALLOGRAPHY (1.9 ANGSTROMS) OF 35-172</scope>
    <scope>FUNCTION</scope>
    <scope>SUBUNIT</scope>
</reference>
<reference key="12">
    <citation type="journal article" date="2008" name="Proteins">
        <title>Crystal structure of the putative carbohydrate recognition domain of human galectin-related protein.</title>
        <authorList>
            <person name="Waelti M.A."/>
            <person name="Thore S."/>
            <person name="Aebi M."/>
            <person name="Kuenzler M."/>
        </authorList>
    </citation>
    <scope>X-RAY CRYSTALLOGRAPHY (2.0 ANGSTROMS) OF 38-171</scope>
    <scope>FUNCTION</scope>
    <scope>SUBUNIT</scope>
</reference>
<proteinExistence type="evidence at protein level"/>
<organism>
    <name type="scientific">Homo sapiens</name>
    <name type="common">Human</name>
    <dbReference type="NCBI Taxonomy" id="9606"/>
    <lineage>
        <taxon>Eukaryota</taxon>
        <taxon>Metazoa</taxon>
        <taxon>Chordata</taxon>
        <taxon>Craniata</taxon>
        <taxon>Vertebrata</taxon>
        <taxon>Euteleostomi</taxon>
        <taxon>Mammalia</taxon>
        <taxon>Eutheria</taxon>
        <taxon>Euarchontoglires</taxon>
        <taxon>Primates</taxon>
        <taxon>Haplorrhini</taxon>
        <taxon>Catarrhini</taxon>
        <taxon>Hominidae</taxon>
        <taxon>Homo</taxon>
    </lineage>
</organism>
<protein>
    <recommendedName>
        <fullName>Galectin-related protein</fullName>
    </recommendedName>
    <alternativeName>
        <fullName>Galectin-like protein</fullName>
    </alternativeName>
    <alternativeName>
        <fullName>Lectin galactoside-binding-like protein</fullName>
    </alternativeName>
</protein>
<keyword id="KW-0002">3D-structure</keyword>
<keyword id="KW-0007">Acetylation</keyword>
<keyword id="KW-0430">Lectin</keyword>
<keyword id="KW-0597">Phosphoprotein</keyword>
<keyword id="KW-1267">Proteomics identification</keyword>
<keyword id="KW-1185">Reference proteome</keyword>
<dbReference type="EMBL" id="AF161508">
    <property type="protein sequence ID" value="AAF29123.1"/>
    <property type="molecule type" value="mRNA"/>
</dbReference>
<dbReference type="EMBL" id="AK314656">
    <property type="protein sequence ID" value="BAG37215.1"/>
    <property type="molecule type" value="mRNA"/>
</dbReference>
<dbReference type="EMBL" id="CH471053">
    <property type="protein sequence ID" value="EAW99942.1"/>
    <property type="molecule type" value="Genomic_DNA"/>
</dbReference>
<dbReference type="EMBL" id="CH471053">
    <property type="protein sequence ID" value="EAW99943.1"/>
    <property type="molecule type" value="Genomic_DNA"/>
</dbReference>
<dbReference type="EMBL" id="BC036082">
    <property type="protein sequence ID" value="AAH36082.1"/>
    <property type="molecule type" value="mRNA"/>
</dbReference>
<dbReference type="EMBL" id="BC062691">
    <property type="protein sequence ID" value="AAH62691.1"/>
    <property type="molecule type" value="mRNA"/>
</dbReference>
<dbReference type="CCDS" id="CCDS1877.1"/>
<dbReference type="RefSeq" id="NP_054900.2">
    <property type="nucleotide sequence ID" value="NM_014181.3"/>
</dbReference>
<dbReference type="RefSeq" id="XP_054197510.1">
    <property type="nucleotide sequence ID" value="XM_054341535.1"/>
</dbReference>
<dbReference type="PDB" id="2JJ6">
    <property type="method" value="X-ray"/>
    <property type="resolution" value="2.00 A"/>
    <property type="chains" value="A/B=38-171"/>
</dbReference>
<dbReference type="PDB" id="3B9C">
    <property type="method" value="X-ray"/>
    <property type="resolution" value="1.90 A"/>
    <property type="chains" value="A/B/C/D=38-172"/>
</dbReference>
<dbReference type="PDBsum" id="2JJ6"/>
<dbReference type="PDBsum" id="3B9C"/>
<dbReference type="SMR" id="Q3ZCW2"/>
<dbReference type="BioGRID" id="118863">
    <property type="interactions" value="41"/>
</dbReference>
<dbReference type="FunCoup" id="Q3ZCW2">
    <property type="interactions" value="169"/>
</dbReference>
<dbReference type="IntAct" id="Q3ZCW2">
    <property type="interactions" value="15"/>
</dbReference>
<dbReference type="STRING" id="9606.ENSP00000238875"/>
<dbReference type="GlyGen" id="Q3ZCW2">
    <property type="glycosylation" value="2 sites, 1 N-linked glycan (1 site), 1 O-linked glycan (1 site)"/>
</dbReference>
<dbReference type="iPTMnet" id="Q3ZCW2"/>
<dbReference type="PhosphoSitePlus" id="Q3ZCW2"/>
<dbReference type="BioMuta" id="LGALSL"/>
<dbReference type="DMDM" id="166223243"/>
<dbReference type="REPRODUCTION-2DPAGE" id="IPI00023549"/>
<dbReference type="jPOST" id="Q3ZCW2"/>
<dbReference type="MassIVE" id="Q3ZCW2"/>
<dbReference type="PaxDb" id="9606-ENSP00000238875"/>
<dbReference type="PeptideAtlas" id="Q3ZCW2"/>
<dbReference type="ProteomicsDB" id="61919"/>
<dbReference type="Pumba" id="Q3ZCW2"/>
<dbReference type="Antibodypedia" id="30823">
    <property type="antibodies" value="104 antibodies from 17 providers"/>
</dbReference>
<dbReference type="DNASU" id="29094"/>
<dbReference type="Ensembl" id="ENST00000238875.10">
    <property type="protein sequence ID" value="ENSP00000238875.4"/>
    <property type="gene ID" value="ENSG00000119862.13"/>
</dbReference>
<dbReference type="GeneID" id="29094"/>
<dbReference type="KEGG" id="hsa:29094"/>
<dbReference type="MANE-Select" id="ENST00000238875.10">
    <property type="protein sequence ID" value="ENSP00000238875.4"/>
    <property type="RefSeq nucleotide sequence ID" value="NM_014181.3"/>
    <property type="RefSeq protein sequence ID" value="NP_054900.2"/>
</dbReference>
<dbReference type="UCSC" id="uc002scy.5">
    <property type="organism name" value="human"/>
</dbReference>
<dbReference type="AGR" id="HGNC:25012"/>
<dbReference type="CTD" id="29094"/>
<dbReference type="DisGeNET" id="29094"/>
<dbReference type="GeneCards" id="LGALSL"/>
<dbReference type="HGNC" id="HGNC:25012">
    <property type="gene designation" value="LGALSL"/>
</dbReference>
<dbReference type="HPA" id="ENSG00000119862">
    <property type="expression patterns" value="Tissue enhanced (retina, skin)"/>
</dbReference>
<dbReference type="MIM" id="617902">
    <property type="type" value="gene"/>
</dbReference>
<dbReference type="neXtProt" id="NX_Q3ZCW2"/>
<dbReference type="OpenTargets" id="ENSG00000119862"/>
<dbReference type="VEuPathDB" id="HostDB:ENSG00000119862"/>
<dbReference type="eggNOG" id="KOG3587">
    <property type="taxonomic scope" value="Eukaryota"/>
</dbReference>
<dbReference type="GeneTree" id="ENSGT00940000155337"/>
<dbReference type="HOGENOM" id="CLU_037794_2_1_1"/>
<dbReference type="InParanoid" id="Q3ZCW2"/>
<dbReference type="OMA" id="CISGEKG"/>
<dbReference type="OrthoDB" id="9857238at2759"/>
<dbReference type="PAN-GO" id="Q3ZCW2">
    <property type="GO annotations" value="0 GO annotations based on evolutionary models"/>
</dbReference>
<dbReference type="PhylomeDB" id="Q3ZCW2"/>
<dbReference type="TreeFam" id="TF315551"/>
<dbReference type="PathwayCommons" id="Q3ZCW2"/>
<dbReference type="SignaLink" id="Q3ZCW2"/>
<dbReference type="BioGRID-ORCS" id="29094">
    <property type="hits" value="10 hits in 1148 CRISPR screens"/>
</dbReference>
<dbReference type="ChiTaRS" id="LGALSL">
    <property type="organism name" value="human"/>
</dbReference>
<dbReference type="EvolutionaryTrace" id="Q3ZCW2"/>
<dbReference type="GeneWiki" id="HSPC159"/>
<dbReference type="GenomeRNAi" id="29094"/>
<dbReference type="Pharos" id="Q3ZCW2">
    <property type="development level" value="Tbio"/>
</dbReference>
<dbReference type="PRO" id="PR:Q3ZCW2"/>
<dbReference type="Proteomes" id="UP000005640">
    <property type="component" value="Chromosome 2"/>
</dbReference>
<dbReference type="RNAct" id="Q3ZCW2">
    <property type="molecule type" value="protein"/>
</dbReference>
<dbReference type="Bgee" id="ENSG00000119862">
    <property type="expression patterns" value="Expressed in upper leg skin and 185 other cell types or tissues"/>
</dbReference>
<dbReference type="ExpressionAtlas" id="Q3ZCW2">
    <property type="expression patterns" value="baseline and differential"/>
</dbReference>
<dbReference type="GO" id="GO:0030246">
    <property type="term" value="F:carbohydrate binding"/>
    <property type="evidence" value="ECO:0000318"/>
    <property type="project" value="GO_Central"/>
</dbReference>
<dbReference type="CDD" id="cd00070">
    <property type="entry name" value="GLECT"/>
    <property type="match status" value="1"/>
</dbReference>
<dbReference type="FunFam" id="2.60.120.200:FF:000046">
    <property type="entry name" value="Galectin"/>
    <property type="match status" value="1"/>
</dbReference>
<dbReference type="Gene3D" id="2.60.120.200">
    <property type="match status" value="1"/>
</dbReference>
<dbReference type="InterPro" id="IPR013320">
    <property type="entry name" value="ConA-like_dom_sf"/>
</dbReference>
<dbReference type="InterPro" id="IPR044156">
    <property type="entry name" value="Galectin-like"/>
</dbReference>
<dbReference type="InterPro" id="IPR001079">
    <property type="entry name" value="Galectin_CRD"/>
</dbReference>
<dbReference type="PANTHER" id="PTHR11346">
    <property type="entry name" value="GALECTIN"/>
    <property type="match status" value="1"/>
</dbReference>
<dbReference type="PANTHER" id="PTHR11346:SF98">
    <property type="entry name" value="GALECTIN-RELATED PROTEIN"/>
    <property type="match status" value="1"/>
</dbReference>
<dbReference type="Pfam" id="PF00337">
    <property type="entry name" value="Gal-bind_lectin"/>
    <property type="match status" value="1"/>
</dbReference>
<dbReference type="SMART" id="SM00908">
    <property type="entry name" value="Gal-bind_lectin"/>
    <property type="match status" value="1"/>
</dbReference>
<dbReference type="SMART" id="SM00276">
    <property type="entry name" value="GLECT"/>
    <property type="match status" value="1"/>
</dbReference>
<dbReference type="SUPFAM" id="SSF49899">
    <property type="entry name" value="Concanavalin A-like lectins/glucanases"/>
    <property type="match status" value="1"/>
</dbReference>
<dbReference type="PROSITE" id="PS51304">
    <property type="entry name" value="GALECTIN"/>
    <property type="match status" value="1"/>
</dbReference>
<name>LEGL_HUMAN</name>
<evidence type="ECO:0000255" key="1">
    <source>
        <dbReference type="PROSITE-ProRule" id="PRU00639"/>
    </source>
</evidence>
<evidence type="ECO:0000269" key="2">
    <source>
    </source>
</evidence>
<evidence type="ECO:0000269" key="3">
    <source>
    </source>
</evidence>
<evidence type="ECO:0000305" key="4"/>
<evidence type="ECO:0000305" key="5">
    <source>
    </source>
</evidence>
<evidence type="ECO:0000305" key="6">
    <source>
    </source>
</evidence>
<evidence type="ECO:0007744" key="7">
    <source>
    </source>
</evidence>
<evidence type="ECO:0007744" key="8">
    <source>
    </source>
</evidence>
<evidence type="ECO:0007744" key="9">
    <source>
    </source>
</evidence>
<evidence type="ECO:0007829" key="10">
    <source>
        <dbReference type="PDB" id="3B9C"/>
    </source>
</evidence>
<gene>
    <name type="primary">LGALSL</name>
    <name type="synonym">GRP</name>
    <name type="ORF">HSPC159</name>
</gene>
<comment type="function">
    <text evidence="2 3">Does not bind lactose, and may not bind carbohydrates.</text>
</comment>
<comment type="subunit">
    <text evidence="5 6">Monomer.</text>
</comment>
<comment type="interaction">
    <interactant intactId="EBI-10241423">
        <id>Q3ZCW2</id>
    </interactant>
    <interactant intactId="EBI-742054">
        <id>Q96D03</id>
        <label>DDIT4L</label>
    </interactant>
    <organismsDiffer>false</organismsDiffer>
    <experiments>3</experiments>
</comment>
<comment type="interaction">
    <interactant intactId="EBI-10241423">
        <id>Q3ZCW2</id>
    </interactant>
    <interactant intactId="EBI-12179869">
        <id>P50458</id>
        <label>LHX2</label>
    </interactant>
    <organismsDiffer>false</organismsDiffer>
    <experiments>3</experiments>
</comment>
<comment type="interaction">
    <interactant intactId="EBI-10241423">
        <id>Q3ZCW2</id>
    </interactant>
    <interactant intactId="EBI-742610">
        <id>Q9Y6D9</id>
        <label>MAD1L1</label>
    </interactant>
    <organismsDiffer>false</organismsDiffer>
    <experiments>6</experiments>
</comment>
<comment type="interaction">
    <interactant intactId="EBI-10241423">
        <id>Q3ZCW2</id>
    </interactant>
    <interactant intactId="EBI-717399">
        <id>Q9BSI4</id>
        <label>TINF2</label>
    </interactant>
    <organismsDiffer>false</organismsDiffer>
    <experiments>2</experiments>
</comment>
<comment type="caution">
    <text evidence="4">Most of the residues in the galectin domain that have been shown to be critical for carbohydrate-binding in other galectins are not conserved.</text>
</comment>
<sequence length="172" mass="18986">MAGSVADSDAVVKLDDGHLNNSLSSPVQADVYFPRLIVPFCGHIKGGMRPGKKVLVMGIVDLNPESFAISLTCGDSEDPPADVAIELKAVFTDRQLLRNSCISGERGEEQSAIPYFPFIPDQPFRVEILCEHPRFRVFVDGHQLFDFYHRIQTLSAIDTIKINGDLQITKLG</sequence>
<accession>Q3ZCW2</accession>
<accession>B2RBG8</accession>
<accession>D6W5E8</accession>
<accession>Q6P5T6</accession>
<accession>Q9P005</accession>
<feature type="initiator methionine" description="Removed" evidence="8">
    <location>
        <position position="1"/>
    </location>
</feature>
<feature type="chain" id="PRO_0000315766" description="Galectin-related protein">
    <location>
        <begin position="2"/>
        <end position="172"/>
    </location>
</feature>
<feature type="domain" description="Galectin" evidence="1">
    <location>
        <begin position="39"/>
        <end position="168"/>
    </location>
</feature>
<feature type="modified residue" description="N-acetylalanine" evidence="8">
    <location>
        <position position="2"/>
    </location>
</feature>
<feature type="modified residue" description="Phosphoserine" evidence="7 9">
    <location>
        <position position="22"/>
    </location>
</feature>
<feature type="modified residue" description="Phosphoserine" evidence="7">
    <location>
        <position position="25"/>
    </location>
</feature>
<feature type="sequence conflict" description="In Ref. 1; AAF29123." evidence="4" ref="1">
    <original>H</original>
    <variation>Y</variation>
    <location>
        <position position="132"/>
    </location>
</feature>
<feature type="sequence conflict" description="In Ref. 4; AAH36082." evidence="4" ref="4">
    <original>R</original>
    <variation>G</variation>
    <location>
        <position position="136"/>
    </location>
</feature>
<feature type="strand" evidence="10">
    <location>
        <begin position="40"/>
        <end position="43"/>
    </location>
</feature>
<feature type="strand" evidence="10">
    <location>
        <begin position="53"/>
        <end position="60"/>
    </location>
</feature>
<feature type="strand" evidence="10">
    <location>
        <begin position="66"/>
        <end position="74"/>
    </location>
</feature>
<feature type="turn" evidence="10">
    <location>
        <begin position="77"/>
        <end position="80"/>
    </location>
</feature>
<feature type="strand" evidence="10">
    <location>
        <begin position="82"/>
        <end position="90"/>
    </location>
</feature>
<feature type="turn" evidence="10">
    <location>
        <begin position="91"/>
        <end position="94"/>
    </location>
</feature>
<feature type="strand" evidence="10">
    <location>
        <begin position="95"/>
        <end position="102"/>
    </location>
</feature>
<feature type="strand" evidence="10">
    <location>
        <begin position="123"/>
        <end position="130"/>
    </location>
</feature>
<feature type="strand" evidence="10">
    <location>
        <begin position="132"/>
        <end position="139"/>
    </location>
</feature>
<feature type="strand" evidence="10">
    <location>
        <begin position="142"/>
        <end position="148"/>
    </location>
</feature>
<feature type="helix" evidence="10">
    <location>
        <begin position="154"/>
        <end position="156"/>
    </location>
</feature>
<feature type="strand" evidence="10">
    <location>
        <begin position="159"/>
        <end position="172"/>
    </location>
</feature>